<organism>
    <name type="scientific">Trieres chinensis</name>
    <name type="common">Marine centric diatom</name>
    <name type="synonym">Odontella sinensis</name>
    <dbReference type="NCBI Taxonomy" id="1514140"/>
    <lineage>
        <taxon>Eukaryota</taxon>
        <taxon>Sar</taxon>
        <taxon>Stramenopiles</taxon>
        <taxon>Ochrophyta</taxon>
        <taxon>Bacillariophyta</taxon>
        <taxon>Mediophyceae</taxon>
        <taxon>Biddulphiophycidae</taxon>
        <taxon>Eupodiscales</taxon>
        <taxon>Parodontellaceae</taxon>
        <taxon>Trieres</taxon>
    </lineage>
</organism>
<protein>
    <recommendedName>
        <fullName evidence="3">Small ribosomal subunit protein uS4c</fullName>
    </recommendedName>
    <alternativeName>
        <fullName>30S ribosomal protein S4, chloroplastic</fullName>
    </alternativeName>
</protein>
<accession>P49492</accession>
<name>RR4_TRICV</name>
<evidence type="ECO:0000250" key="1"/>
<evidence type="ECO:0000256" key="2">
    <source>
        <dbReference type="SAM" id="MobiDB-lite"/>
    </source>
</evidence>
<evidence type="ECO:0000305" key="3"/>
<dbReference type="EMBL" id="Z67753">
    <property type="protein sequence ID" value="CAA91654.1"/>
    <property type="molecule type" value="Genomic_DNA"/>
</dbReference>
<dbReference type="PIR" id="S78281">
    <property type="entry name" value="S78281"/>
</dbReference>
<dbReference type="RefSeq" id="NP_043622.1">
    <property type="nucleotide sequence ID" value="NC_001713.1"/>
</dbReference>
<dbReference type="SMR" id="P49492"/>
<dbReference type="GeneID" id="801775"/>
<dbReference type="GO" id="GO:0009507">
    <property type="term" value="C:chloroplast"/>
    <property type="evidence" value="ECO:0007669"/>
    <property type="project" value="UniProtKB-SubCell"/>
</dbReference>
<dbReference type="GO" id="GO:0015935">
    <property type="term" value="C:small ribosomal subunit"/>
    <property type="evidence" value="ECO:0007669"/>
    <property type="project" value="InterPro"/>
</dbReference>
<dbReference type="GO" id="GO:0019843">
    <property type="term" value="F:rRNA binding"/>
    <property type="evidence" value="ECO:0007669"/>
    <property type="project" value="UniProtKB-UniRule"/>
</dbReference>
<dbReference type="GO" id="GO:0003735">
    <property type="term" value="F:structural constituent of ribosome"/>
    <property type="evidence" value="ECO:0007669"/>
    <property type="project" value="InterPro"/>
</dbReference>
<dbReference type="GO" id="GO:0042274">
    <property type="term" value="P:ribosomal small subunit biogenesis"/>
    <property type="evidence" value="ECO:0007669"/>
    <property type="project" value="TreeGrafter"/>
</dbReference>
<dbReference type="GO" id="GO:0006412">
    <property type="term" value="P:translation"/>
    <property type="evidence" value="ECO:0007669"/>
    <property type="project" value="UniProtKB-UniRule"/>
</dbReference>
<dbReference type="CDD" id="cd00165">
    <property type="entry name" value="S4"/>
    <property type="match status" value="1"/>
</dbReference>
<dbReference type="FunFam" id="3.10.290.10:FF:000001">
    <property type="entry name" value="30S ribosomal protein S4"/>
    <property type="match status" value="1"/>
</dbReference>
<dbReference type="FunFam" id="1.10.1050.10:FF:000002">
    <property type="entry name" value="30S ribosomal protein S4, chloroplastic"/>
    <property type="match status" value="1"/>
</dbReference>
<dbReference type="Gene3D" id="1.10.1050.10">
    <property type="entry name" value="Ribosomal Protein S4 Delta 41, Chain A, domain 1"/>
    <property type="match status" value="1"/>
</dbReference>
<dbReference type="Gene3D" id="3.10.290.10">
    <property type="entry name" value="RNA-binding S4 domain"/>
    <property type="match status" value="1"/>
</dbReference>
<dbReference type="HAMAP" id="MF_01306_B">
    <property type="entry name" value="Ribosomal_uS4_B"/>
    <property type="match status" value="1"/>
</dbReference>
<dbReference type="InterPro" id="IPR022801">
    <property type="entry name" value="Ribosomal_uS4"/>
</dbReference>
<dbReference type="InterPro" id="IPR005709">
    <property type="entry name" value="Ribosomal_uS4_bac-type"/>
</dbReference>
<dbReference type="InterPro" id="IPR018079">
    <property type="entry name" value="Ribosomal_uS4_CS"/>
</dbReference>
<dbReference type="InterPro" id="IPR001912">
    <property type="entry name" value="Ribosomal_uS4_N"/>
</dbReference>
<dbReference type="InterPro" id="IPR002942">
    <property type="entry name" value="S4_RNA-bd"/>
</dbReference>
<dbReference type="InterPro" id="IPR036986">
    <property type="entry name" value="S4_RNA-bd_sf"/>
</dbReference>
<dbReference type="NCBIfam" id="NF003717">
    <property type="entry name" value="PRK05327.1"/>
    <property type="match status" value="1"/>
</dbReference>
<dbReference type="NCBIfam" id="TIGR01017">
    <property type="entry name" value="rpsD_bact"/>
    <property type="match status" value="1"/>
</dbReference>
<dbReference type="PANTHER" id="PTHR11831">
    <property type="entry name" value="30S 40S RIBOSOMAL PROTEIN"/>
    <property type="match status" value="1"/>
</dbReference>
<dbReference type="PANTHER" id="PTHR11831:SF4">
    <property type="entry name" value="SMALL RIBOSOMAL SUBUNIT PROTEIN US4M"/>
    <property type="match status" value="1"/>
</dbReference>
<dbReference type="Pfam" id="PF00163">
    <property type="entry name" value="Ribosomal_S4"/>
    <property type="match status" value="1"/>
</dbReference>
<dbReference type="Pfam" id="PF01479">
    <property type="entry name" value="S4"/>
    <property type="match status" value="1"/>
</dbReference>
<dbReference type="SMART" id="SM01390">
    <property type="entry name" value="Ribosomal_S4"/>
    <property type="match status" value="1"/>
</dbReference>
<dbReference type="SMART" id="SM00363">
    <property type="entry name" value="S4"/>
    <property type="match status" value="1"/>
</dbReference>
<dbReference type="SUPFAM" id="SSF55174">
    <property type="entry name" value="Alpha-L RNA-binding motif"/>
    <property type="match status" value="1"/>
</dbReference>
<dbReference type="PROSITE" id="PS00632">
    <property type="entry name" value="RIBOSOMAL_S4"/>
    <property type="match status" value="1"/>
</dbReference>
<dbReference type="PROSITE" id="PS50889">
    <property type="entry name" value="S4"/>
    <property type="match status" value="1"/>
</dbReference>
<keyword id="KW-0150">Chloroplast</keyword>
<keyword id="KW-0934">Plastid</keyword>
<keyword id="KW-0687">Ribonucleoprotein</keyword>
<keyword id="KW-0689">Ribosomal protein</keyword>
<keyword id="KW-0694">RNA-binding</keyword>
<keyword id="KW-0699">rRNA-binding</keyword>
<gene>
    <name type="primary">rps4</name>
</gene>
<geneLocation type="chloroplast"/>
<sequence length="206" mass="23557">MSRYRGPKLRITRRLGALPGLTQKQSKKKGRPGQHGKSNEADNSKKTTEYGIRLEEKQKLKFNYGLTESQLYRYIKEARRRKGVTGLILLQLLEMRLDTICFTLGFAPTIASARQLVNHGHITVNDNVVSIPSFQCQINDVIGIKPKATSKNLVEGNLQTIKQVDLPTHLKFDKSKQEATVINYCDRNELLLNLDELLVIEYYSRR</sequence>
<feature type="chain" id="PRO_0000132638" description="Small ribosomal subunit protein uS4c">
    <location>
        <begin position="1"/>
        <end position="206"/>
    </location>
</feature>
<feature type="domain" description="S4 RNA-binding">
    <location>
        <begin position="95"/>
        <end position="157"/>
    </location>
</feature>
<feature type="region of interest" description="Disordered" evidence="2">
    <location>
        <begin position="1"/>
        <end position="50"/>
    </location>
</feature>
<feature type="compositionally biased region" description="Basic residues" evidence="2">
    <location>
        <begin position="1"/>
        <end position="13"/>
    </location>
</feature>
<feature type="compositionally biased region" description="Basic residues" evidence="2">
    <location>
        <begin position="25"/>
        <end position="34"/>
    </location>
</feature>
<feature type="compositionally biased region" description="Basic and acidic residues" evidence="2">
    <location>
        <begin position="37"/>
        <end position="50"/>
    </location>
</feature>
<proteinExistence type="inferred from homology"/>
<comment type="function">
    <text evidence="1">One of the primary rRNA binding proteins, it binds directly to 16S rRNA where it nucleates assembly of the body of the 30S subunit.</text>
</comment>
<comment type="function">
    <text evidence="1">With S5 and S12 plays an important role in translational accuracy.</text>
</comment>
<comment type="subunit">
    <text evidence="1">Part of the 30S ribosomal subunit. Contacts protein S5. The interaction surface between S4 and S5 is involved in control of translational fidelity (By similarity).</text>
</comment>
<comment type="subcellular location">
    <subcellularLocation>
        <location>Plastid</location>
        <location>Chloroplast</location>
    </subcellularLocation>
</comment>
<comment type="similarity">
    <text evidence="3">Belongs to the universal ribosomal protein uS4 family.</text>
</comment>
<reference key="1">
    <citation type="journal article" date="1995" name="Plant Mol. Biol. Rep.">
        <title>The chloroplast genome of a chlorophyll a+c-containing alga, Odontella sinensis.</title>
        <authorList>
            <person name="Kowallik K.V."/>
            <person name="Stoebe B."/>
            <person name="Schaffran I."/>
            <person name="Kroth-Pancic P."/>
            <person name="Freier U."/>
        </authorList>
    </citation>
    <scope>NUCLEOTIDE SEQUENCE [LARGE SCALE GENOMIC DNA]</scope>
</reference>